<sequence>MSKIIRSSDESRGALENGVNSLADAVKVTIGPKGRNVVLEKKFGAPDIVNDGVTIARDIELENPFENLGAKLIEQVASKTKDKAGDGTTTATVLAQVMVHEGLKNTAAGASPIEIRRGMEKAVSHIVDKLQQQSKKISGDKVLQVATVSSGGDEEIGAMVAEAMDKVSVDGVITVEESKSLNTELEITEGMAFDRGYSSPYFVTDAERQICEFENPLLLITDRKISSIADLVPVLETVQKSSSPLVILAEEVDGEALATLVVNKNRGVLQVASVRAPSFGERRKAALADIAVLTKGTLISEDKAMTLDKVSLADLGKARKITITKESTTIVANDDTKKEVASRVASIKRELDQTDSDYDKEKLNERIAKLAGGVAVIKVGAPTETELKNRKLRIEDALNATRAAVEEGIVAGGGSTLIKLGEELDSLSKSLDGDQATGVDIIKKALSAPAKQIALNAGENGDVVVSEIQRLGKGFNAATGQYEDLISAGIIDAVKVIRLALQDAVSIASLLITTEVIIADKPEPPSPAGGEGGGDPMGGMGGMGGMGGMGMPGMGGMGMPGMM</sequence>
<name>CH601_PROMA</name>
<reference key="1">
    <citation type="journal article" date="2003" name="Proc. Natl. Acad. Sci. U.S.A.">
        <title>Genome sequence of the cyanobacterium Prochlorococcus marinus SS120, a nearly minimal oxyphototrophic genome.</title>
        <authorList>
            <person name="Dufresne A."/>
            <person name="Salanoubat M."/>
            <person name="Partensky F."/>
            <person name="Artiguenave F."/>
            <person name="Axmann I.M."/>
            <person name="Barbe V."/>
            <person name="Duprat S."/>
            <person name="Galperin M.Y."/>
            <person name="Koonin E.V."/>
            <person name="Le Gall F."/>
            <person name="Makarova K.S."/>
            <person name="Ostrowski M."/>
            <person name="Oztas S."/>
            <person name="Robert C."/>
            <person name="Rogozin I.B."/>
            <person name="Scanlan D.J."/>
            <person name="Tandeau de Marsac N."/>
            <person name="Weissenbach J."/>
            <person name="Wincker P."/>
            <person name="Wolf Y.I."/>
            <person name="Hess W.R."/>
        </authorList>
    </citation>
    <scope>NUCLEOTIDE SEQUENCE [LARGE SCALE GENOMIC DNA]</scope>
    <source>
        <strain>SARG / CCMP1375 / SS120</strain>
    </source>
</reference>
<evidence type="ECO:0000255" key="1">
    <source>
        <dbReference type="HAMAP-Rule" id="MF_00600"/>
    </source>
</evidence>
<evidence type="ECO:0000256" key="2">
    <source>
        <dbReference type="SAM" id="MobiDB-lite"/>
    </source>
</evidence>
<feature type="chain" id="PRO_0000063480" description="Chaperonin GroEL 1">
    <location>
        <begin position="1"/>
        <end position="563"/>
    </location>
</feature>
<feature type="region of interest" description="Disordered" evidence="2">
    <location>
        <begin position="520"/>
        <end position="545"/>
    </location>
</feature>
<feature type="compositionally biased region" description="Gly residues" evidence="2">
    <location>
        <begin position="529"/>
        <end position="545"/>
    </location>
</feature>
<feature type="binding site" evidence="1">
    <location>
        <begin position="29"/>
        <end position="32"/>
    </location>
    <ligand>
        <name>ATP</name>
        <dbReference type="ChEBI" id="CHEBI:30616"/>
    </ligand>
</feature>
<feature type="binding site" evidence="1">
    <location>
        <begin position="86"/>
        <end position="90"/>
    </location>
    <ligand>
        <name>ATP</name>
        <dbReference type="ChEBI" id="CHEBI:30616"/>
    </ligand>
</feature>
<feature type="binding site" evidence="1">
    <location>
        <position position="413"/>
    </location>
    <ligand>
        <name>ATP</name>
        <dbReference type="ChEBI" id="CHEBI:30616"/>
    </ligand>
</feature>
<feature type="binding site" evidence="1">
    <location>
        <begin position="476"/>
        <end position="478"/>
    </location>
    <ligand>
        <name>ATP</name>
        <dbReference type="ChEBI" id="CHEBI:30616"/>
    </ligand>
</feature>
<feature type="binding site" evidence="1">
    <location>
        <position position="492"/>
    </location>
    <ligand>
        <name>ATP</name>
        <dbReference type="ChEBI" id="CHEBI:30616"/>
    </ligand>
</feature>
<protein>
    <recommendedName>
        <fullName evidence="1">Chaperonin GroEL 1</fullName>
        <ecNumber evidence="1">5.6.1.7</ecNumber>
    </recommendedName>
    <alternativeName>
        <fullName evidence="1">60 kDa chaperonin 1</fullName>
    </alternativeName>
    <alternativeName>
        <fullName evidence="1">Chaperonin-60 1</fullName>
        <shortName evidence="1">Cpn60 1</shortName>
    </alternativeName>
</protein>
<gene>
    <name evidence="1" type="primary">groEL1</name>
    <name evidence="1" type="synonym">groL1</name>
    <name type="ordered locus">Pro_0448</name>
</gene>
<keyword id="KW-0067">ATP-binding</keyword>
<keyword id="KW-0143">Chaperone</keyword>
<keyword id="KW-0963">Cytoplasm</keyword>
<keyword id="KW-0413">Isomerase</keyword>
<keyword id="KW-0547">Nucleotide-binding</keyword>
<keyword id="KW-1185">Reference proteome</keyword>
<comment type="function">
    <text evidence="1">Together with its co-chaperonin GroES, plays an essential role in assisting protein folding. The GroEL-GroES system forms a nano-cage that allows encapsulation of the non-native substrate proteins and provides a physical environment optimized to promote and accelerate protein folding.</text>
</comment>
<comment type="catalytic activity">
    <reaction evidence="1">
        <text>ATP + H2O + a folded polypeptide = ADP + phosphate + an unfolded polypeptide.</text>
        <dbReference type="EC" id="5.6.1.7"/>
    </reaction>
</comment>
<comment type="subunit">
    <text evidence="1">Forms a cylinder of 14 subunits composed of two heptameric rings stacked back-to-back. Interacts with the co-chaperonin GroES.</text>
</comment>
<comment type="subcellular location">
    <subcellularLocation>
        <location evidence="1">Cytoplasm</location>
    </subcellularLocation>
</comment>
<comment type="similarity">
    <text evidence="1">Belongs to the chaperonin (HSP60) family.</text>
</comment>
<proteinExistence type="inferred from homology"/>
<dbReference type="EC" id="5.6.1.7" evidence="1"/>
<dbReference type="EMBL" id="AE017126">
    <property type="protein sequence ID" value="AAP99494.1"/>
    <property type="molecule type" value="Genomic_DNA"/>
</dbReference>
<dbReference type="RefSeq" id="NP_874842.1">
    <property type="nucleotide sequence ID" value="NC_005042.1"/>
</dbReference>
<dbReference type="SMR" id="Q7TVA6"/>
<dbReference type="STRING" id="167539.Pro_0448"/>
<dbReference type="EnsemblBacteria" id="AAP99494">
    <property type="protein sequence ID" value="AAP99494"/>
    <property type="gene ID" value="Pro_0448"/>
</dbReference>
<dbReference type="KEGG" id="pma:Pro_0448"/>
<dbReference type="PATRIC" id="fig|167539.5.peg.459"/>
<dbReference type="eggNOG" id="COG0459">
    <property type="taxonomic scope" value="Bacteria"/>
</dbReference>
<dbReference type="HOGENOM" id="CLU_016503_3_0_3"/>
<dbReference type="OrthoDB" id="9766614at2"/>
<dbReference type="Proteomes" id="UP000001420">
    <property type="component" value="Chromosome"/>
</dbReference>
<dbReference type="GO" id="GO:0005737">
    <property type="term" value="C:cytoplasm"/>
    <property type="evidence" value="ECO:0007669"/>
    <property type="project" value="UniProtKB-SubCell"/>
</dbReference>
<dbReference type="GO" id="GO:0005524">
    <property type="term" value="F:ATP binding"/>
    <property type="evidence" value="ECO:0007669"/>
    <property type="project" value="UniProtKB-UniRule"/>
</dbReference>
<dbReference type="GO" id="GO:0140662">
    <property type="term" value="F:ATP-dependent protein folding chaperone"/>
    <property type="evidence" value="ECO:0007669"/>
    <property type="project" value="InterPro"/>
</dbReference>
<dbReference type="GO" id="GO:0016853">
    <property type="term" value="F:isomerase activity"/>
    <property type="evidence" value="ECO:0007669"/>
    <property type="project" value="UniProtKB-KW"/>
</dbReference>
<dbReference type="GO" id="GO:0051082">
    <property type="term" value="F:unfolded protein binding"/>
    <property type="evidence" value="ECO:0007669"/>
    <property type="project" value="UniProtKB-UniRule"/>
</dbReference>
<dbReference type="GO" id="GO:0042026">
    <property type="term" value="P:protein refolding"/>
    <property type="evidence" value="ECO:0007669"/>
    <property type="project" value="UniProtKB-UniRule"/>
</dbReference>
<dbReference type="CDD" id="cd03344">
    <property type="entry name" value="GroEL"/>
    <property type="match status" value="1"/>
</dbReference>
<dbReference type="FunFam" id="3.50.7.10:FF:000001">
    <property type="entry name" value="60 kDa chaperonin"/>
    <property type="match status" value="1"/>
</dbReference>
<dbReference type="Gene3D" id="3.50.7.10">
    <property type="entry name" value="GroEL"/>
    <property type="match status" value="1"/>
</dbReference>
<dbReference type="Gene3D" id="1.10.560.10">
    <property type="entry name" value="GroEL-like equatorial domain"/>
    <property type="match status" value="1"/>
</dbReference>
<dbReference type="Gene3D" id="3.30.260.10">
    <property type="entry name" value="TCP-1-like chaperonin intermediate domain"/>
    <property type="match status" value="1"/>
</dbReference>
<dbReference type="HAMAP" id="MF_00600">
    <property type="entry name" value="CH60"/>
    <property type="match status" value="1"/>
</dbReference>
<dbReference type="InterPro" id="IPR018370">
    <property type="entry name" value="Chaperonin_Cpn60_CS"/>
</dbReference>
<dbReference type="InterPro" id="IPR001844">
    <property type="entry name" value="Cpn60/GroEL"/>
</dbReference>
<dbReference type="InterPro" id="IPR002423">
    <property type="entry name" value="Cpn60/GroEL/TCP-1"/>
</dbReference>
<dbReference type="InterPro" id="IPR027409">
    <property type="entry name" value="GroEL-like_apical_dom_sf"/>
</dbReference>
<dbReference type="InterPro" id="IPR027413">
    <property type="entry name" value="GROEL-like_equatorial_sf"/>
</dbReference>
<dbReference type="InterPro" id="IPR027410">
    <property type="entry name" value="TCP-1-like_intermed_sf"/>
</dbReference>
<dbReference type="NCBIfam" id="TIGR02348">
    <property type="entry name" value="GroEL"/>
    <property type="match status" value="1"/>
</dbReference>
<dbReference type="NCBIfam" id="NF000592">
    <property type="entry name" value="PRK00013.1"/>
    <property type="match status" value="1"/>
</dbReference>
<dbReference type="NCBIfam" id="NF009487">
    <property type="entry name" value="PRK12849.1"/>
    <property type="match status" value="1"/>
</dbReference>
<dbReference type="NCBIfam" id="NF009488">
    <property type="entry name" value="PRK12850.1"/>
    <property type="match status" value="1"/>
</dbReference>
<dbReference type="NCBIfam" id="NF009489">
    <property type="entry name" value="PRK12851.1"/>
    <property type="match status" value="1"/>
</dbReference>
<dbReference type="PANTHER" id="PTHR45633">
    <property type="entry name" value="60 KDA HEAT SHOCK PROTEIN, MITOCHONDRIAL"/>
    <property type="match status" value="1"/>
</dbReference>
<dbReference type="Pfam" id="PF00118">
    <property type="entry name" value="Cpn60_TCP1"/>
    <property type="match status" value="1"/>
</dbReference>
<dbReference type="PRINTS" id="PR00298">
    <property type="entry name" value="CHAPERONIN60"/>
</dbReference>
<dbReference type="SUPFAM" id="SSF52029">
    <property type="entry name" value="GroEL apical domain-like"/>
    <property type="match status" value="1"/>
</dbReference>
<dbReference type="SUPFAM" id="SSF48592">
    <property type="entry name" value="GroEL equatorial domain-like"/>
    <property type="match status" value="1"/>
</dbReference>
<dbReference type="SUPFAM" id="SSF54849">
    <property type="entry name" value="GroEL-intermediate domain like"/>
    <property type="match status" value="1"/>
</dbReference>
<dbReference type="PROSITE" id="PS00296">
    <property type="entry name" value="CHAPERONINS_CPN60"/>
    <property type="match status" value="1"/>
</dbReference>
<organism>
    <name type="scientific">Prochlorococcus marinus (strain SARG / CCMP1375 / SS120)</name>
    <dbReference type="NCBI Taxonomy" id="167539"/>
    <lineage>
        <taxon>Bacteria</taxon>
        <taxon>Bacillati</taxon>
        <taxon>Cyanobacteriota</taxon>
        <taxon>Cyanophyceae</taxon>
        <taxon>Synechococcales</taxon>
        <taxon>Prochlorococcaceae</taxon>
        <taxon>Prochlorococcus</taxon>
    </lineage>
</organism>
<accession>Q7TVA6</accession>